<gene>
    <name type="primary">NTP4</name>
</gene>
<reference key="1">
    <citation type="submission" date="1995-11" db="EMBL/GenBank/DDBJ databases">
        <authorList>
            <person name="Cote S."/>
            <person name="Morency M."/>
            <person name="Levesque R.C."/>
        </authorList>
    </citation>
    <scope>NUCLEOTIDE SEQUENCE [GENOMIC DNA]</scope>
    <source>
        <strain>Nicole</strain>
    </source>
</reference>
<sequence length="592" mass="65762">LPEKRINVGKKHLQTLRNLETRCHDSFQAFVVIDARSSSTRTNVFLAKTRSCPNRGRSIDPDSIRLIREGKRFTGLRVVLEEWLDTYAGKDWESRPVDARLLFQYVPQMHEGAKKPMQLLEEDTVAILDSQLNEKQKVQVKALGIPAMLCSTAGVRDFHEWYRDALFVLLRHLINNPSPAHGYKFFTNPFWTRPITGAEEGLFAFITLNHLSRRLGEDPARCMIDEYGVKQCRNDLAGVVEVGGASAQIVFPLQEGTVLPSSVRAVNLQRERLLPERYPSADVVSVSFMQLGMASSAGLFLKELCSNDEFLQGGICSNPCLFKGFQQSCSAGEVEVRPDGSASVNEDVRKNRLKPLATYCSVNNPEISFKVTNEMQCRENSIDPTKPLAERMKIENCSIIKGTGNFDKCVSQVESILVAPKLPLPANIEAASSGFESVDQVFRFASSTAPMIVTGGGMLAAINTLKDHRLLRSDFSGDVEELAEAAREFCSSEVIIRTDGPVIQLPNARGEQKLNSLNFDLCKTMALTVSLLRHMAAGENQPSFIKWEKSIAGPDGKPLADLGWQVGVILHHVLFTEEWGRNAYEAGYSHNL</sequence>
<proteinExistence type="uncertain"/>
<organism>
    <name type="scientific">Toxoplasma gondii</name>
    <dbReference type="NCBI Taxonomy" id="5811"/>
    <lineage>
        <taxon>Eukaryota</taxon>
        <taxon>Sar</taxon>
        <taxon>Alveolata</taxon>
        <taxon>Apicomplexa</taxon>
        <taxon>Conoidasida</taxon>
        <taxon>Coccidia</taxon>
        <taxon>Eucoccidiorida</taxon>
        <taxon>Eimeriorina</taxon>
        <taxon>Sarcocystidae</taxon>
        <taxon>Toxoplasma</taxon>
    </lineage>
</organism>
<protein>
    <recommendedName>
        <fullName>Putative nucleoside-triphosphatase</fullName>
        <shortName>NTPase</shortName>
        <ecNumber>3.6.1.15</ecNumber>
    </recommendedName>
    <alternativeName>
        <fullName>Nucleoside triphosphate phosphohydrolase</fullName>
    </alternativeName>
</protein>
<name>NTP4_TOXGO</name>
<comment type="catalytic activity">
    <reaction>
        <text>a ribonucleoside 5'-triphosphate + H2O = a ribonucleoside 5'-diphosphate + phosphate + H(+)</text>
        <dbReference type="Rhea" id="RHEA:23680"/>
        <dbReference type="ChEBI" id="CHEBI:15377"/>
        <dbReference type="ChEBI" id="CHEBI:15378"/>
        <dbReference type="ChEBI" id="CHEBI:43474"/>
        <dbReference type="ChEBI" id="CHEBI:57930"/>
        <dbReference type="ChEBI" id="CHEBI:61557"/>
        <dbReference type="EC" id="3.6.1.15"/>
    </reaction>
</comment>
<comment type="similarity">
    <text evidence="2">Belongs to the GDA1/CD39 NTPase family.</text>
</comment>
<comment type="caution">
    <text evidence="2">Could be the product of a pseudogene. It does not seem to start with an initiator Met.</text>
</comment>
<comment type="sequence caution" evidence="2">
    <conflict type="erroneous initiation">
        <sequence resource="EMBL-CDS" id="AAA80336"/>
    </conflict>
</comment>
<accession>P52913</accession>
<dbReference type="EC" id="3.6.1.15"/>
<dbReference type="EMBL" id="U28353">
    <property type="protein sequence ID" value="AAA80336.1"/>
    <property type="status" value="ALT_INIT"/>
    <property type="molecule type" value="Genomic_DNA"/>
</dbReference>
<dbReference type="SMR" id="P52913"/>
<dbReference type="VEuPathDB" id="ToxoDB:TGARI_371290"/>
<dbReference type="VEuPathDB" id="ToxoDB:TGCAST_358870"/>
<dbReference type="VEuPathDB" id="ToxoDB:TGCOUG_395210"/>
<dbReference type="VEuPathDB" id="ToxoDB:TGDOM2_278878"/>
<dbReference type="VEuPathDB" id="ToxoDB:TGDOM2_400630"/>
<dbReference type="VEuPathDB" id="ToxoDB:TGFOU_278882"/>
<dbReference type="VEuPathDB" id="ToxoDB:TGGT1_277270"/>
<dbReference type="VEuPathDB" id="ToxoDB:TGGT1_408820"/>
<dbReference type="VEuPathDB" id="ToxoDB:TGMAS_363610"/>
<dbReference type="VEuPathDB" id="ToxoDB:TGMAS_364050"/>
<dbReference type="VEuPathDB" id="ToxoDB:TGME49_278882"/>
<dbReference type="VEuPathDB" id="ToxoDB:TGP89_358330"/>
<dbReference type="VEuPathDB" id="ToxoDB:TGP89_422570"/>
<dbReference type="VEuPathDB" id="ToxoDB:TGPRC2_358870"/>
<dbReference type="VEuPathDB" id="ToxoDB:TGRH88_066180"/>
<dbReference type="VEuPathDB" id="ToxoDB:TGRUB_278882"/>
<dbReference type="VEuPathDB" id="ToxoDB:TGVAND_278882"/>
<dbReference type="VEuPathDB" id="ToxoDB:TGVEG_360830"/>
<dbReference type="GO" id="GO:0005576">
    <property type="term" value="C:extracellular region"/>
    <property type="evidence" value="ECO:0007669"/>
    <property type="project" value="InterPro"/>
</dbReference>
<dbReference type="GO" id="GO:0016020">
    <property type="term" value="C:membrane"/>
    <property type="evidence" value="ECO:0007669"/>
    <property type="project" value="TreeGrafter"/>
</dbReference>
<dbReference type="GO" id="GO:0017110">
    <property type="term" value="F:nucleoside diphosphate phosphatase activity"/>
    <property type="evidence" value="ECO:0007669"/>
    <property type="project" value="TreeGrafter"/>
</dbReference>
<dbReference type="GO" id="GO:0017111">
    <property type="term" value="F:ribonucleoside triphosphate phosphatase activity"/>
    <property type="evidence" value="ECO:0007669"/>
    <property type="project" value="UniProtKB-EC"/>
</dbReference>
<dbReference type="GO" id="GO:0009134">
    <property type="term" value="P:nucleoside diphosphate catabolic process"/>
    <property type="evidence" value="ECO:0007669"/>
    <property type="project" value="TreeGrafter"/>
</dbReference>
<dbReference type="CDD" id="cd24037">
    <property type="entry name" value="ASKHA_NBD_TgNTPase-like"/>
    <property type="match status" value="1"/>
</dbReference>
<dbReference type="Gene3D" id="3.30.420.530">
    <property type="match status" value="1"/>
</dbReference>
<dbReference type="Gene3D" id="3.30.420.540">
    <property type="match status" value="1"/>
</dbReference>
<dbReference type="InterPro" id="IPR000407">
    <property type="entry name" value="GDA1_CD39_NTPase"/>
</dbReference>
<dbReference type="InterPro" id="IPR017227">
    <property type="entry name" value="NTPase_alveloata"/>
</dbReference>
<dbReference type="PANTHER" id="PTHR11782">
    <property type="entry name" value="ADENOSINE/GUANOSINE DIPHOSPHATASE"/>
    <property type="match status" value="1"/>
</dbReference>
<dbReference type="PANTHER" id="PTHR11782:SF83">
    <property type="entry name" value="GUANOSINE-DIPHOSPHATASE"/>
    <property type="match status" value="1"/>
</dbReference>
<dbReference type="Pfam" id="PF01150">
    <property type="entry name" value="GDA1_CD39"/>
    <property type="match status" value="1"/>
</dbReference>
<dbReference type="PIRSF" id="PIRSF037506">
    <property type="entry name" value="NTPase"/>
    <property type="match status" value="1"/>
</dbReference>
<dbReference type="PROSITE" id="PS01238">
    <property type="entry name" value="GDA1_CD39_NTPASE"/>
    <property type="match status" value="1"/>
</dbReference>
<evidence type="ECO:0000250" key="1"/>
<evidence type="ECO:0000305" key="2"/>
<keyword id="KW-0378">Hydrolase</keyword>
<feature type="chain" id="PRO_0000209922" description="Putative nucleoside-triphosphatase">
    <location>
        <begin position="1"/>
        <end position="592"/>
    </location>
</feature>
<feature type="active site" description="Proton acceptor" evidence="1">
    <location>
        <position position="200"/>
    </location>
</feature>